<protein>
    <recommendedName>
        <fullName evidence="2">RNA-binding protein KhpB</fullName>
    </recommendedName>
    <alternativeName>
        <fullName evidence="8">Elongasome regulating protein</fullName>
        <shortName evidence="8">EloR</shortName>
    </alternativeName>
    <alternativeName>
        <fullName evidence="9">KH-domain protein B</fullName>
    </alternativeName>
    <alternativeName>
        <fullName evidence="2">RNA-binding protein EloR</fullName>
    </alternativeName>
    <alternativeName>
        <fullName evidence="7">RNA-binding protein Jag</fullName>
    </alternativeName>
</protein>
<dbReference type="EMBL" id="AE007317">
    <property type="protein sequence ID" value="AAL00654.1"/>
    <property type="molecule type" value="Genomic_DNA"/>
</dbReference>
<dbReference type="PIR" id="A99703">
    <property type="entry name" value="A99703"/>
</dbReference>
<dbReference type="PIR" id="H95238">
    <property type="entry name" value="H95238"/>
</dbReference>
<dbReference type="RefSeq" id="NP_359443.1">
    <property type="nucleotide sequence ID" value="NC_003098.1"/>
</dbReference>
<dbReference type="RefSeq" id="WP_000260012.1">
    <property type="nucleotide sequence ID" value="NC_003098.1"/>
</dbReference>
<dbReference type="STRING" id="171101.spr1851"/>
<dbReference type="iPTMnet" id="Q8CY87"/>
<dbReference type="KEGG" id="spr:spr1851"/>
<dbReference type="PATRIC" id="fig|171101.6.peg.1997"/>
<dbReference type="eggNOG" id="COG1847">
    <property type="taxonomic scope" value="Bacteria"/>
</dbReference>
<dbReference type="HOGENOM" id="CLU_042512_0_0_9"/>
<dbReference type="Proteomes" id="UP000000586">
    <property type="component" value="Chromosome"/>
</dbReference>
<dbReference type="GO" id="GO:0005737">
    <property type="term" value="C:cytoplasm"/>
    <property type="evidence" value="ECO:0007669"/>
    <property type="project" value="UniProtKB-SubCell"/>
</dbReference>
<dbReference type="GO" id="GO:0003723">
    <property type="term" value="F:RNA binding"/>
    <property type="evidence" value="ECO:0007669"/>
    <property type="project" value="UniProtKB-UniRule"/>
</dbReference>
<dbReference type="GO" id="GO:0071555">
    <property type="term" value="P:cell wall organization"/>
    <property type="evidence" value="ECO:0007669"/>
    <property type="project" value="UniProtKB-KW"/>
</dbReference>
<dbReference type="GO" id="GO:0009252">
    <property type="term" value="P:peptidoglycan biosynthetic process"/>
    <property type="evidence" value="ECO:0007669"/>
    <property type="project" value="UniProtKB-UniRule"/>
</dbReference>
<dbReference type="GO" id="GO:0008360">
    <property type="term" value="P:regulation of cell shape"/>
    <property type="evidence" value="ECO:0007669"/>
    <property type="project" value="UniProtKB-KW"/>
</dbReference>
<dbReference type="CDD" id="cd02414">
    <property type="entry name" value="KH-II_Jag"/>
    <property type="match status" value="1"/>
</dbReference>
<dbReference type="CDD" id="cd02644">
    <property type="entry name" value="R3H_jag"/>
    <property type="match status" value="1"/>
</dbReference>
<dbReference type="Gene3D" id="3.30.300.20">
    <property type="match status" value="1"/>
</dbReference>
<dbReference type="Gene3D" id="3.30.30.80">
    <property type="entry name" value="probable RNA-binding protein from clostridium symbiosum atcc 14940"/>
    <property type="match status" value="1"/>
</dbReference>
<dbReference type="Gene3D" id="3.30.1370.50">
    <property type="entry name" value="R3H-like domain"/>
    <property type="match status" value="1"/>
</dbReference>
<dbReference type="HAMAP" id="MF_00867">
    <property type="entry name" value="KhpB"/>
    <property type="match status" value="1"/>
</dbReference>
<dbReference type="InterPro" id="IPR038008">
    <property type="entry name" value="Jag_KH"/>
</dbReference>
<dbReference type="InterPro" id="IPR038247">
    <property type="entry name" value="Jag_N_dom_sf"/>
</dbReference>
<dbReference type="InterPro" id="IPR015946">
    <property type="entry name" value="KH_dom-like_a/b"/>
</dbReference>
<dbReference type="InterPro" id="IPR039247">
    <property type="entry name" value="KhpB"/>
</dbReference>
<dbReference type="InterPro" id="IPR032782">
    <property type="entry name" value="KhpB_N"/>
</dbReference>
<dbReference type="InterPro" id="IPR001374">
    <property type="entry name" value="R3H_dom"/>
</dbReference>
<dbReference type="InterPro" id="IPR036867">
    <property type="entry name" value="R3H_dom_sf"/>
</dbReference>
<dbReference type="InterPro" id="IPR034079">
    <property type="entry name" value="R3H_KhpB"/>
</dbReference>
<dbReference type="NCBIfam" id="NF041568">
    <property type="entry name" value="Jag_EloR"/>
    <property type="match status" value="1"/>
</dbReference>
<dbReference type="PANTHER" id="PTHR35800">
    <property type="entry name" value="PROTEIN JAG"/>
    <property type="match status" value="1"/>
</dbReference>
<dbReference type="PANTHER" id="PTHR35800:SF1">
    <property type="entry name" value="RNA-BINDING PROTEIN KHPB"/>
    <property type="match status" value="1"/>
</dbReference>
<dbReference type="Pfam" id="PF14804">
    <property type="entry name" value="Jag_N"/>
    <property type="match status" value="1"/>
</dbReference>
<dbReference type="Pfam" id="PF13083">
    <property type="entry name" value="KH_KhpA-B"/>
    <property type="match status" value="1"/>
</dbReference>
<dbReference type="Pfam" id="PF01424">
    <property type="entry name" value="R3H"/>
    <property type="match status" value="1"/>
</dbReference>
<dbReference type="SMART" id="SM01245">
    <property type="entry name" value="Jag_N"/>
    <property type="match status" value="1"/>
</dbReference>
<dbReference type="SMART" id="SM00393">
    <property type="entry name" value="R3H"/>
    <property type="match status" value="1"/>
</dbReference>
<dbReference type="SUPFAM" id="SSF82708">
    <property type="entry name" value="R3H domain"/>
    <property type="match status" value="1"/>
</dbReference>
<dbReference type="PROSITE" id="PS51061">
    <property type="entry name" value="R3H"/>
    <property type="match status" value="1"/>
</dbReference>
<sequence length="328" mass="37110">MVVFTGSTVEEAIQKGLKELDIPRMKAHIKVISREKKGFLGLFGKKPAQVDIEAISETTVVKANQQVVKGVPKKINDLNEPVKTVSEETVDLGHVVDAIKKIEEEGQGISDEVKAEILKHERHASTILEETGHIEILNELQIEEAMREEAGADDLETEQDQAESQELEDLGLKVETNFDIEQVATEVMAYVQTIIDDMDVEATLSNDYNRRSINLQIDTNEPGRIIGYHGKVLKALQLLAQNYLYNRYSRTFYVTINVNDYVEHRAEVLQTYAQKLATRVLEEGRSHKTDPMSNSERKIIHRIISRMDGVTSYSEGDEPNRYVVVDTE</sequence>
<organism>
    <name type="scientific">Streptococcus pneumoniae (strain ATCC BAA-255 / R6)</name>
    <dbReference type="NCBI Taxonomy" id="171101"/>
    <lineage>
        <taxon>Bacteria</taxon>
        <taxon>Bacillati</taxon>
        <taxon>Bacillota</taxon>
        <taxon>Bacilli</taxon>
        <taxon>Lactobacillales</taxon>
        <taxon>Streptococcaceae</taxon>
        <taxon>Streptococcus</taxon>
    </lineage>
</organism>
<reference key="1">
    <citation type="journal article" date="2001" name="J. Bacteriol.">
        <title>Genome of the bacterium Streptococcus pneumoniae strain R6.</title>
        <authorList>
            <person name="Hoskins J."/>
            <person name="Alborn W.E. Jr."/>
            <person name="Arnold J."/>
            <person name="Blaszczak L.C."/>
            <person name="Burgett S."/>
            <person name="DeHoff B.S."/>
            <person name="Estrem S.T."/>
            <person name="Fritz L."/>
            <person name="Fu D.-J."/>
            <person name="Fuller W."/>
            <person name="Geringer C."/>
            <person name="Gilmour R."/>
            <person name="Glass J.S."/>
            <person name="Khoja H."/>
            <person name="Kraft A.R."/>
            <person name="Lagace R.E."/>
            <person name="LeBlanc D.J."/>
            <person name="Lee L.N."/>
            <person name="Lefkowitz E.J."/>
            <person name="Lu J."/>
            <person name="Matsushima P."/>
            <person name="McAhren S.M."/>
            <person name="McHenney M."/>
            <person name="McLeaster K."/>
            <person name="Mundy C.W."/>
            <person name="Nicas T.I."/>
            <person name="Norris F.H."/>
            <person name="O'Gara M."/>
            <person name="Peery R.B."/>
            <person name="Robertson G.T."/>
            <person name="Rockey P."/>
            <person name="Sun P.-M."/>
            <person name="Winkler M.E."/>
            <person name="Yang Y."/>
            <person name="Young-Bellido M."/>
            <person name="Zhao G."/>
            <person name="Zook C.A."/>
            <person name="Baltz R.H."/>
            <person name="Jaskunas S.R."/>
            <person name="Rosteck P.R. Jr."/>
            <person name="Skatrud P.L."/>
            <person name="Glass J.I."/>
        </authorList>
    </citation>
    <scope>NUCLEOTIDE SEQUENCE [LARGE SCALE GENOMIC DNA]</scope>
    <source>
        <strain>ATCC BAA-255 / R6</strain>
    </source>
</reference>
<reference key="2">
    <citation type="journal article" date="2016" name="BMC Microbiol.">
        <title>Characterization of pneumococcal Ser/Thr protein phosphatase phpP mutant and identification of a novel PhpP substrate, putative RNA binding protein Jag.</title>
        <authorList>
            <person name="Ulrych A."/>
            <person name="Holeckova N."/>
            <person name="Goldova J."/>
            <person name="Doubravova L."/>
            <person name="Benada O."/>
            <person name="Kofronova O."/>
            <person name="Halada P."/>
            <person name="Branny P."/>
        </authorList>
    </citation>
    <scope>IDENTIFICATION BY MASS SPECTROMETRY</scope>
    <scope>FUNCTION</scope>
    <scope>DOMAIN</scope>
    <scope>PHOSPHORYLATION AT THR-89</scope>
    <scope>DISRUPTION PHENOTYPE</scope>
    <scope>MUTAGENESIS OF THR-89</scope>
    <source>
        <strain>Rx1</strain>
    </source>
</reference>
<reference key="3">
    <citation type="journal article" date="2017" name="Mol. Microbiol.">
        <title>Identification of EloR (Spr1851) as a regulator of cell elongation in Streptococcus pneumoniae.</title>
        <authorList>
            <person name="Stamsaas G.A."/>
            <person name="Straume D."/>
            <person name="Ruud Winther A."/>
            <person name="Kjos M."/>
            <person name="Frantzen C.A."/>
            <person name="Haavarstein L.S."/>
        </authorList>
    </citation>
    <scope>FUNCTION</scope>
    <scope>SUBCELLULAR LOCATION</scope>
    <scope>DOMAIN</scope>
    <scope>PHOSPHORYLATION</scope>
    <scope>DISRUPTION PHENOTYPE</scope>
    <scope>MUTAGENESIS OF THR-89; 228-TYR-HIS-229 AND 297-ARG--HIS-301</scope>
    <source>
        <strain>R6 / R704</strain>
    </source>
</reference>
<reference key="4">
    <citation type="journal article" date="2019" name="Sci. Rep.">
        <title>Prevention of EloR/KhpA heterodimerization by introduction of site-specific amino acid substitutions renders the essential elongasome protein PBP2b redundant in Streptococcus pneumoniae.</title>
        <authorList>
            <person name="Winther A.R."/>
            <person name="Kjos M."/>
            <person name="Stamsaas G.A."/>
            <person name="Haavarstein L.S."/>
            <person name="Straume D."/>
        </authorList>
    </citation>
    <scope>FUNCTION</scope>
    <scope>INTERACTION WITH KHPA</scope>
    <scope>SUBUNIT</scope>
    <scope>DOMAIN</scope>
    <scope>DISRUPTION PHENOTYPE</scope>
    <scope>MUTAGENESIS OF LEU-239</scope>
    <source>
        <strain>R6 / R704</strain>
    </source>
</reference>
<reference key="5">
    <citation type="journal article" date="2021" name="J. Bacteriol.">
        <title>EloR interacts with the lytic transglycosylase MltG at midcell in Streptococcus pneumoniae R6.</title>
        <authorList>
            <person name="Winther A.R."/>
            <person name="Kjos M."/>
            <person name="Herigstad M.L."/>
            <person name="Haavarstein L.S."/>
            <person name="Straume D."/>
        </authorList>
    </citation>
    <scope>INTERACTION WITH MLTG; RODZ AND YIDC2</scope>
    <scope>SUBCELLULAR LOCATION</scope>
    <scope>DOMAIN</scope>
    <source>
        <strain>R6 / R704</strain>
    </source>
</reference>
<name>KHPB_STRR6</name>
<proteinExistence type="evidence at protein level"/>
<feature type="chain" id="PRO_0000454544" description="RNA-binding protein KhpB">
    <location>
        <begin position="1"/>
        <end position="328"/>
    </location>
</feature>
<feature type="domain" description="KH" evidence="2 10 11">
    <location>
        <begin position="181"/>
        <end position="258"/>
    </location>
</feature>
<feature type="domain" description="R3H" evidence="2 10 11">
    <location>
        <begin position="263"/>
        <end position="328"/>
    </location>
</feature>
<feature type="region of interest" description="Jag_N domain" evidence="2 10 11">
    <location>
        <begin position="3"/>
        <end position="53"/>
    </location>
</feature>
<feature type="region of interest" description="Linker" evidence="10 11">
    <location>
        <begin position="54"/>
        <end position="180"/>
    </location>
</feature>
<feature type="modified residue" description="Phosphothreonine" evidence="3">
    <location>
        <position position="89"/>
    </location>
</feature>
<feature type="mutagenesis site" description="Nearly complete loss of phosphothreonine (strain Rx1), loss of 1 phosphothreonine (in strain R6). In R6 cells are significantly smaller." evidence="3 4">
    <original>T</original>
    <variation>A</variation>
    <location>
        <position position="89"/>
    </location>
</feature>
<feature type="mutagenesis site" description="Can only be found in strain R6 cells when mreC or rodZ acquire suppressor mutations; cells are significantly smaller." evidence="4">
    <original>T</original>
    <variation>E</variation>
    <location>
        <position position="89"/>
    </location>
</feature>
<feature type="mutagenesis site" description="Can only be found in strain R6 cells when rodZ acquires suppressor mutations; cells are significantly smaller." evidence="4">
    <original>YH</original>
    <variation>DD</variation>
    <location>
        <begin position="228"/>
        <end position="229"/>
    </location>
</feature>
<feature type="mutagenesis site" description="Loss of interaction with KhpA, pbp2b can be deleted, KphA not found at midcell." evidence="5">
    <original>L</original>
    <variation>Y</variation>
    <location>
        <position position="239"/>
    </location>
</feature>
<feature type="mutagenesis site" description="Can only be found in strain R6 cells when mreC acquires suppressor mutations; cells are significantly smaller." evidence="4">
    <original>RKIIH</original>
    <variation>KKIIY</variation>
    <location>
        <begin position="297"/>
        <end position="301"/>
    </location>
</feature>
<evidence type="ECO:0000250" key="1">
    <source>
        <dbReference type="UniProtKB" id="A0A0H2ZPS7"/>
    </source>
</evidence>
<evidence type="ECO:0000255" key="2">
    <source>
        <dbReference type="HAMAP-Rule" id="MF_00867"/>
    </source>
</evidence>
<evidence type="ECO:0000269" key="3">
    <source>
    </source>
</evidence>
<evidence type="ECO:0000269" key="4">
    <source>
    </source>
</evidence>
<evidence type="ECO:0000269" key="5">
    <source>
    </source>
</evidence>
<evidence type="ECO:0000269" key="6">
    <source>
    </source>
</evidence>
<evidence type="ECO:0000303" key="7">
    <source>
    </source>
</evidence>
<evidence type="ECO:0000303" key="8">
    <source>
    </source>
</evidence>
<evidence type="ECO:0000305" key="9"/>
<evidence type="ECO:0000305" key="10">
    <source>
    </source>
</evidence>
<evidence type="ECO:0000305" key="11">
    <source>
    </source>
</evidence>
<keyword id="KW-0133">Cell shape</keyword>
<keyword id="KW-0961">Cell wall biogenesis/degradation</keyword>
<keyword id="KW-0143">Chaperone</keyword>
<keyword id="KW-0963">Cytoplasm</keyword>
<keyword id="KW-0597">Phosphoprotein</keyword>
<keyword id="KW-1185">Reference proteome</keyword>
<keyword id="KW-0694">RNA-binding</keyword>
<accession>Q8CY87</accession>
<comment type="function">
    <text evidence="2">A probable RNA chaperone. Forms a complex with KhpA which binds to cellular RNA and controls its expression. Plays a role in peptidoglycan (PG) homeostasis and cell length regulation.</text>
</comment>
<comment type="function">
    <text evidence="1 3 5 11">Forms a complex with KhpA which stimulates or controls elongasome-mediated lateral cell wall biosynthesis (PubMed:30842445). RNA-bonding protein; overexpression leads to cell elongation, suggesting it plays a role in cell division and maintenance of cell shape (PubMed:27776484). In cell elongation the phosphorylated form activates cell elongation while the non-phosphorylated form is less active or inactive (Probable). Probably plays a role in regulation of other RNAs (By similarity).</text>
</comment>
<comment type="subunit">
    <text evidence="3 4 5 6">Interacts with StkP which phosphorylates it (PubMed:27776484, PubMed:28710862). Interacts with KhpA via the KH domain of this protein (PubMed:30842445). Interacts with MreC in the elongasome (PubMed:28710862). Interacts with MltG, RodZ and YidC2, interacts with MltG's N-terminus (PubMed:33558392).</text>
</comment>
<comment type="subcellular location">
    <subcellularLocation>
        <location evidence="2 11">Cytoplasm</location>
    </subcellularLocation>
    <text evidence="4 6">Localizes to midcell in the septal area; some protein remains in the cytoplasm.</text>
</comment>
<comment type="domain">
    <text evidence="4 5 6 10 11">Has an N-terminal Jag-N, a linker with a phosphorylated Thr, and 2 RNA-binding domains (KH and R3H) (Probable). A phosphomimetic mutation and mutations that prevent nucleic acid binding are not tolerated in strain R6 (PubMed:28710862). The KH domain of this protein interacts with KhpA (PubMed:30842445). The Jag-N domain is responsible for targeting to the midcell (PubMed:33558392).</text>
</comment>
<comment type="PTM">
    <text evidence="3 4">Phosphorylated on Thr-89 by StkP; there is another phosphorylated Thr residue in the protein, which is more strongly phosphorylated in strain R6 than in Rx1 (PubMed:27776484, PubMed:28710862). Dephosphorylated by PhpP (PubMed:27776484). Phosphorylation is increased in an R6 strain with a C-terminal MreC deletion (PubMed:28710862).</text>
</comment>
<comment type="disruption phenotype">
    <text evidence="3 4 5">Grows more slowly with a longer lag phase and decreased final density compared to wild-type. Cells are significantly smaller (PubMed:27776484, PubMed:28710862). Suppresses deletions of PBP2b (penA). Double penA-khpB or rodA-khpB deletions partially alleviate the slow growth phenotype of the single deletion (PubMed:28710862). KhpA is no longer targeted to midcell (PubMed:30842445).</text>
</comment>
<comment type="miscellaneous">
    <text evidence="10">Strain Rx1 is unencapsulated.</text>
</comment>
<comment type="similarity">
    <text evidence="2">Belongs to the KhpB RNA-binding protein family.</text>
</comment>
<gene>
    <name evidence="2" type="primary">khpB</name>
    <name evidence="2 8" type="synonym">eloR</name>
    <name evidence="7" type="synonym">jag</name>
    <name type="ordered locus">spr1851</name>
</gene>